<sequence>MITLYNTLTRQKEVFKPIEPGKVKMYVCGPTVYNYIHIGNARPAINYDVVRRYFEYQGYNVEYVSNFTDVDDKLIKRSQELNQSVPEIAEKYIAAFHEDVGALNVRKATSNPRVMDHMDDIIQFIKDLVDQGYAYESGGDVYFRTRKFEGYGKLSHQSIDDLKVGARIDAGEHKEDALDFTLWKKAKPGEISWDSPFGEGRPGWHIECSVMAFHELGPTIDIHAGGSDLQFPHHENEIAQSEAHNHAPFANYWMHNGFINIDNEKMSKSLGNFILVHDIIKEVDPDVLRFFMISVHYRSPINYNLELVESARSGLERIRNSYQLIEERAQIATNIENQQTYIDQIDAILNRFETVMNDDFNTANAITAWYDLAKLANKYVLENTTSTEVIDKFKAVYQIFSDVLGVPLKSKNADELLDEDVEKLIEERNEARKNKDFARADEIRDMLKSQNIILEDTPQGVRFKRG</sequence>
<comment type="catalytic activity">
    <reaction evidence="1">
        <text>tRNA(Cys) + L-cysteine + ATP = L-cysteinyl-tRNA(Cys) + AMP + diphosphate</text>
        <dbReference type="Rhea" id="RHEA:17773"/>
        <dbReference type="Rhea" id="RHEA-COMP:9661"/>
        <dbReference type="Rhea" id="RHEA-COMP:9679"/>
        <dbReference type="ChEBI" id="CHEBI:30616"/>
        <dbReference type="ChEBI" id="CHEBI:33019"/>
        <dbReference type="ChEBI" id="CHEBI:35235"/>
        <dbReference type="ChEBI" id="CHEBI:78442"/>
        <dbReference type="ChEBI" id="CHEBI:78517"/>
        <dbReference type="ChEBI" id="CHEBI:456215"/>
        <dbReference type="EC" id="6.1.1.16"/>
    </reaction>
</comment>
<comment type="cofactor">
    <cofactor evidence="1">
        <name>Zn(2+)</name>
        <dbReference type="ChEBI" id="CHEBI:29105"/>
    </cofactor>
    <text evidence="1">Binds 1 zinc ion per subunit.</text>
</comment>
<comment type="subunit">
    <text evidence="1">Monomer.</text>
</comment>
<comment type="subcellular location">
    <subcellularLocation>
        <location evidence="1">Cytoplasm</location>
    </subcellularLocation>
</comment>
<comment type="similarity">
    <text evidence="1">Belongs to the class-I aminoacyl-tRNA synthetase family.</text>
</comment>
<gene>
    <name evidence="1" type="primary">cysS</name>
    <name type="ordered locus">SAUSA300_0515</name>
</gene>
<evidence type="ECO:0000255" key="1">
    <source>
        <dbReference type="HAMAP-Rule" id="MF_00041"/>
    </source>
</evidence>
<reference key="1">
    <citation type="journal article" date="2006" name="Lancet">
        <title>Complete genome sequence of USA300, an epidemic clone of community-acquired meticillin-resistant Staphylococcus aureus.</title>
        <authorList>
            <person name="Diep B.A."/>
            <person name="Gill S.R."/>
            <person name="Chang R.F."/>
            <person name="Phan T.H."/>
            <person name="Chen J.H."/>
            <person name="Davidson M.G."/>
            <person name="Lin F."/>
            <person name="Lin J."/>
            <person name="Carleton H.A."/>
            <person name="Mongodin E.F."/>
            <person name="Sensabaugh G.F."/>
            <person name="Perdreau-Remington F."/>
        </authorList>
    </citation>
    <scope>NUCLEOTIDE SEQUENCE [LARGE SCALE GENOMIC DNA]</scope>
    <source>
        <strain>USA300</strain>
    </source>
</reference>
<feature type="chain" id="PRO_0000240959" description="Cysteine--tRNA ligase">
    <location>
        <begin position="1"/>
        <end position="466"/>
    </location>
</feature>
<feature type="short sequence motif" description="'HIGH' region">
    <location>
        <begin position="30"/>
        <end position="40"/>
    </location>
</feature>
<feature type="short sequence motif" description="'KMSKS' region">
    <location>
        <begin position="265"/>
        <end position="269"/>
    </location>
</feature>
<feature type="binding site" evidence="1">
    <location>
        <position position="28"/>
    </location>
    <ligand>
        <name>Zn(2+)</name>
        <dbReference type="ChEBI" id="CHEBI:29105"/>
    </ligand>
</feature>
<feature type="binding site" evidence="1">
    <location>
        <position position="208"/>
    </location>
    <ligand>
        <name>Zn(2+)</name>
        <dbReference type="ChEBI" id="CHEBI:29105"/>
    </ligand>
</feature>
<feature type="binding site" evidence="1">
    <location>
        <position position="233"/>
    </location>
    <ligand>
        <name>Zn(2+)</name>
        <dbReference type="ChEBI" id="CHEBI:29105"/>
    </ligand>
</feature>
<feature type="binding site" evidence="1">
    <location>
        <position position="237"/>
    </location>
    <ligand>
        <name>Zn(2+)</name>
        <dbReference type="ChEBI" id="CHEBI:29105"/>
    </ligand>
</feature>
<feature type="binding site" evidence="1">
    <location>
        <position position="268"/>
    </location>
    <ligand>
        <name>ATP</name>
        <dbReference type="ChEBI" id="CHEBI:30616"/>
    </ligand>
</feature>
<accession>Q2FJB0</accession>
<protein>
    <recommendedName>
        <fullName evidence="1">Cysteine--tRNA ligase</fullName>
        <ecNumber evidence="1">6.1.1.16</ecNumber>
    </recommendedName>
    <alternativeName>
        <fullName evidence="1">Cysteinyl-tRNA synthetase</fullName>
        <shortName evidence="1">CysRS</shortName>
    </alternativeName>
</protein>
<keyword id="KW-0030">Aminoacyl-tRNA synthetase</keyword>
<keyword id="KW-0067">ATP-binding</keyword>
<keyword id="KW-0963">Cytoplasm</keyword>
<keyword id="KW-0436">Ligase</keyword>
<keyword id="KW-0479">Metal-binding</keyword>
<keyword id="KW-0547">Nucleotide-binding</keyword>
<keyword id="KW-0648">Protein biosynthesis</keyword>
<keyword id="KW-0862">Zinc</keyword>
<dbReference type="EC" id="6.1.1.16" evidence="1"/>
<dbReference type="EMBL" id="CP000255">
    <property type="protein sequence ID" value="ABD20572.1"/>
    <property type="molecule type" value="Genomic_DNA"/>
</dbReference>
<dbReference type="RefSeq" id="WP_000631963.1">
    <property type="nucleotide sequence ID" value="NZ_CP027476.1"/>
</dbReference>
<dbReference type="SMR" id="Q2FJB0"/>
<dbReference type="KEGG" id="saa:SAUSA300_0515"/>
<dbReference type="HOGENOM" id="CLU_013528_0_1_9"/>
<dbReference type="Proteomes" id="UP000001939">
    <property type="component" value="Chromosome"/>
</dbReference>
<dbReference type="GO" id="GO:0005829">
    <property type="term" value="C:cytosol"/>
    <property type="evidence" value="ECO:0007669"/>
    <property type="project" value="TreeGrafter"/>
</dbReference>
<dbReference type="GO" id="GO:0005524">
    <property type="term" value="F:ATP binding"/>
    <property type="evidence" value="ECO:0007669"/>
    <property type="project" value="UniProtKB-UniRule"/>
</dbReference>
<dbReference type="GO" id="GO:0004817">
    <property type="term" value="F:cysteine-tRNA ligase activity"/>
    <property type="evidence" value="ECO:0007669"/>
    <property type="project" value="UniProtKB-UniRule"/>
</dbReference>
<dbReference type="GO" id="GO:0008270">
    <property type="term" value="F:zinc ion binding"/>
    <property type="evidence" value="ECO:0007669"/>
    <property type="project" value="UniProtKB-UniRule"/>
</dbReference>
<dbReference type="GO" id="GO:0006423">
    <property type="term" value="P:cysteinyl-tRNA aminoacylation"/>
    <property type="evidence" value="ECO:0007669"/>
    <property type="project" value="UniProtKB-UniRule"/>
</dbReference>
<dbReference type="CDD" id="cd00672">
    <property type="entry name" value="CysRS_core"/>
    <property type="match status" value="1"/>
</dbReference>
<dbReference type="FunFam" id="1.20.120.1910:FF:000002">
    <property type="entry name" value="Cysteine--tRNA ligase"/>
    <property type="match status" value="1"/>
</dbReference>
<dbReference type="FunFam" id="3.40.50.620:FF:000009">
    <property type="entry name" value="Cysteine--tRNA ligase"/>
    <property type="match status" value="1"/>
</dbReference>
<dbReference type="Gene3D" id="1.20.120.1910">
    <property type="entry name" value="Cysteine-tRNA ligase, C-terminal anti-codon recognition domain"/>
    <property type="match status" value="1"/>
</dbReference>
<dbReference type="Gene3D" id="3.40.50.620">
    <property type="entry name" value="HUPs"/>
    <property type="match status" value="1"/>
</dbReference>
<dbReference type="HAMAP" id="MF_00041">
    <property type="entry name" value="Cys_tRNA_synth"/>
    <property type="match status" value="1"/>
</dbReference>
<dbReference type="InterPro" id="IPR015803">
    <property type="entry name" value="Cys-tRNA-ligase"/>
</dbReference>
<dbReference type="InterPro" id="IPR015273">
    <property type="entry name" value="Cys-tRNA-synt_Ia_DALR"/>
</dbReference>
<dbReference type="InterPro" id="IPR024909">
    <property type="entry name" value="Cys-tRNA/MSH_ligase"/>
</dbReference>
<dbReference type="InterPro" id="IPR056411">
    <property type="entry name" value="CysS_C"/>
</dbReference>
<dbReference type="InterPro" id="IPR014729">
    <property type="entry name" value="Rossmann-like_a/b/a_fold"/>
</dbReference>
<dbReference type="InterPro" id="IPR032678">
    <property type="entry name" value="tRNA-synt_1_cat_dom"/>
</dbReference>
<dbReference type="InterPro" id="IPR009080">
    <property type="entry name" value="tRNAsynth_Ia_anticodon-bd"/>
</dbReference>
<dbReference type="NCBIfam" id="TIGR00435">
    <property type="entry name" value="cysS"/>
    <property type="match status" value="1"/>
</dbReference>
<dbReference type="PANTHER" id="PTHR10890:SF3">
    <property type="entry name" value="CYSTEINE--TRNA LIGASE, CYTOPLASMIC"/>
    <property type="match status" value="1"/>
</dbReference>
<dbReference type="PANTHER" id="PTHR10890">
    <property type="entry name" value="CYSTEINYL-TRNA SYNTHETASE"/>
    <property type="match status" value="1"/>
</dbReference>
<dbReference type="Pfam" id="PF23493">
    <property type="entry name" value="CysS_C"/>
    <property type="match status" value="1"/>
</dbReference>
<dbReference type="Pfam" id="PF09190">
    <property type="entry name" value="DALR_2"/>
    <property type="match status" value="1"/>
</dbReference>
<dbReference type="Pfam" id="PF01406">
    <property type="entry name" value="tRNA-synt_1e"/>
    <property type="match status" value="1"/>
</dbReference>
<dbReference type="PRINTS" id="PR00983">
    <property type="entry name" value="TRNASYNTHCYS"/>
</dbReference>
<dbReference type="SMART" id="SM00840">
    <property type="entry name" value="DALR_2"/>
    <property type="match status" value="1"/>
</dbReference>
<dbReference type="SUPFAM" id="SSF47323">
    <property type="entry name" value="Anticodon-binding domain of a subclass of class I aminoacyl-tRNA synthetases"/>
    <property type="match status" value="1"/>
</dbReference>
<dbReference type="SUPFAM" id="SSF52374">
    <property type="entry name" value="Nucleotidylyl transferase"/>
    <property type="match status" value="1"/>
</dbReference>
<name>SYC_STAA3</name>
<organism>
    <name type="scientific">Staphylococcus aureus (strain USA300)</name>
    <dbReference type="NCBI Taxonomy" id="367830"/>
    <lineage>
        <taxon>Bacteria</taxon>
        <taxon>Bacillati</taxon>
        <taxon>Bacillota</taxon>
        <taxon>Bacilli</taxon>
        <taxon>Bacillales</taxon>
        <taxon>Staphylococcaceae</taxon>
        <taxon>Staphylococcus</taxon>
    </lineage>
</organism>
<proteinExistence type="inferred from homology"/>